<protein>
    <recommendedName>
        <fullName evidence="13">BTB/POZ domain and ankyrin repeat-containing protein NBCL</fullName>
    </recommendedName>
    <alternativeName>
        <fullName evidence="12">NOOT-BOP-COCH-like protein</fullName>
        <shortName evidence="12">LaNBCL</shortName>
    </alternativeName>
    <alternativeName>
        <fullName evidence="11">Protein ABSCISSION DEFICIENT</fullName>
    </alternativeName>
    <alternativeName>
        <fullName evidence="11">Protein DELAYED ABSCISSION</fullName>
        <shortName evidence="11">Delabs</shortName>
    </alternativeName>
    <alternativeName>
        <fullName evidence="11 12">Protein STIPULE DEFICIENT</fullName>
    </alternativeName>
</protein>
<sequence>MSLEDSLRSLSLDYLNLLINGQAFSDVTFSVEGRLVHAHRCILAARSLFFRKFFCGGSDPSASSGLIDQTGIRVNPSGSPRSSNGVLVIPVNSVGYEVFLLLLQFLYSGQVSIVPQKHEARPNCGERGCWHTHCSSAVDLALDTLAAARYFGVEQLALLTQKQLASMVEKASIEDVMKVLLASRKQDMQQLWTTCSHLVAKSGLPPEVLAKHLPIEIVAKIEELRLKSSIARRSMMPHHHHHHHQHDLNAAADLEDQKIRRMRRALDSSDVELVKLMVMGEGLNLDEALALHYAVENCSREVVKALLELGAADVNYPAGPAGKTPLHIAAEMVSPDMVAVLLDHHADPNVRTVDNVTPLDILRTLTSDFLFKGAIPGLTHIEPNKLRLCLELVQSAALVLSREEGNANNNPPSSTTTTLPMYHHPMNDDHNSSSSSGNNHNIANLNLDSRLVYLNLGATVGSGQMSDDHGGRHGDPAMYHHSHHDY</sequence>
<gene>
    <name evidence="12" type="primary">NBCL</name>
    <name evidence="11" type="synonym">ABS</name>
    <name evidence="11 12" type="synonym">STIP</name>
    <name evidence="16" type="ORF">TanjilG_11814</name>
</gene>
<reference evidence="14 15" key="1">
    <citation type="journal article" date="2016" name="New Phytol.">
        <title>The legume NOOT-BOP-COCH-LIKE genes are conserved regulators of abscission, a major agronomical trait in cultivated crops.</title>
        <authorList>
            <person name="Couzigou J.-M."/>
            <person name="Magne K."/>
            <person name="Mondy S."/>
            <person name="Cosson V."/>
            <person name="Clements J."/>
            <person name="Ratet P."/>
        </authorList>
    </citation>
    <scope>NUCLEOTIDE SEQUENCE [MRNA]</scope>
    <scope>FUNCTION</scope>
    <scope>MUTAGENESIS OF SER-395</scope>
    <source>
        <strain>cv. Merrit</strain>
        <strain>cv. Merrit line 2860</strain>
    </source>
</reference>
<reference key="2">
    <citation type="journal article" date="2017" name="Plant Biotechnol. J.">
        <title>A comprehensive draft genome sequence for lupin (Lupinus angustifolius), an emerging health food: insights into plant-microbe interactions and legume evolution.</title>
        <authorList>
            <person name="Hane J.K."/>
            <person name="Ming Y."/>
            <person name="Kamphuis L.G."/>
            <person name="Nelson M.N."/>
            <person name="Garg G."/>
            <person name="Atkins C.A."/>
            <person name="Bayer P.E."/>
            <person name="Bravo A."/>
            <person name="Bringans S."/>
            <person name="Cannon S."/>
            <person name="Edwards D."/>
            <person name="Foley R."/>
            <person name="Gao L.L."/>
            <person name="Harrison M.J."/>
            <person name="Huang W."/>
            <person name="Hurgobin B."/>
            <person name="Li S."/>
            <person name="Liu C.W."/>
            <person name="McGrath A."/>
            <person name="Morahan G."/>
            <person name="Murray J."/>
            <person name="Weller J."/>
            <person name="Jian J."/>
            <person name="Singh K.B."/>
        </authorList>
    </citation>
    <scope>NUCLEOTIDE SEQUENCE [LARGE SCALE GENOMIC DNA]</scope>
    <source>
        <strain>cv. Tanjil</strain>
        <tissue>Seedling</tissue>
    </source>
</reference>
<reference key="3">
    <citation type="journal article" date="2001" name="Am. J. Bot.">
        <title>Characterization of a non-abscission mutant in Lupinus angustifolius. I. Genetic and structural aspects.</title>
        <authorList>
            <person name="Clements J."/>
            <person name="Atkins C."/>
        </authorList>
    </citation>
    <scope>FUNCTION</scope>
    <scope>DISRUPTION PHENOTYPE</scope>
    <scope>MUTAGENESIS OF SER-395</scope>
    <source>
        <strain>cv. Danja</strain>
        <strain>cv. Merrit</strain>
    </source>
</reference>
<comment type="function">
    <text evidence="1 2 3 9 10">May act as a substrate-specific adapter of an E3 ubiquitin-protein ligase complex (CUL3-RBX1-BTB) which mediates the ubiquitination and subsequent proteasomal degradation of target proteins (By similarity). Transcriptional co-regulator involved in the promotion of leaf and floral meristem fate and determinacy (By similarity). Necessary for the development of stipules at the base of petioles (PubMed:11159123). Required for the abscission of senescent organs, probably by regulating the cell wall disorganization in abscission zones (AZs, e.g. pulvini at the base of leaves) (PubMed:11159123, PubMed:26390061). Promotes slightly root-cap border cells separation from the root tip (PubMed:11159123). Involved in the coordination of the symbiotic nodule developmental program; promotes the formation of root nodules by interacting directly with APP1 to modulate the expression of the nuclear transcription factor Y subunit (NF-YA1), a key nodulin (By similarity). Necessary for the robust maintenance of nodule identity throughout the nodule developmental program (By similarity).</text>
</comment>
<comment type="pathway">
    <text evidence="2">Protein modification; protein ubiquitination.</text>
</comment>
<comment type="subunit">
    <text evidence="4">Homodimer.</text>
</comment>
<comment type="subcellular location">
    <subcellularLocation>
        <location evidence="1">Nucleus</location>
    </subcellularLocation>
    <subcellularLocation>
        <location evidence="1">Cytoplasm</location>
    </subcellularLocation>
    <subcellularLocation>
        <location evidence="1">Cell membrane</location>
        <topology evidence="1">Peripheral membrane protein</topology>
        <orientation evidence="1">Cytoplasmic side</orientation>
    </subcellularLocation>
</comment>
<comment type="domain">
    <text evidence="2">The BTB/POZ domain mediates the interaction with some component of ubiquitin ligase complexes.</text>
</comment>
<comment type="disruption phenotype">
    <text evidence="9">Defective in stipule formation and impaired organs abscission in the spontaneous mutant abs1/Abs(-) and in mutants Delabs and Abs2(-) associated with the lack of extensive cell wall disorganization during senescence (PubMed:11159123). Slightly reduced separation of root-cap border cells from the root tip (PubMed:11159123).</text>
</comment>
<comment type="similarity">
    <text evidence="13">Belongs to the plant 'ANKYRIN-BTB/POZ' family. 'NOOT-BOP-COCH-like' (NBCL) subfamily.</text>
</comment>
<dbReference type="EMBL" id="KP739832">
    <property type="protein sequence ID" value="AKQ62940.1"/>
    <property type="molecule type" value="mRNA"/>
</dbReference>
<dbReference type="EMBL" id="KP739833">
    <property type="protein sequence ID" value="AKQ62941.1"/>
    <property type="molecule type" value="mRNA"/>
</dbReference>
<dbReference type="EMBL" id="CM007370">
    <property type="protein sequence ID" value="OIW03177.1"/>
    <property type="molecule type" value="Genomic_DNA"/>
</dbReference>
<dbReference type="SMR" id="A0A0K0PU92"/>
<dbReference type="STRING" id="3871.A0A0K0PU92"/>
<dbReference type="EnsemblPlants" id="OIW03177">
    <property type="protein sequence ID" value="OIW03177"/>
    <property type="gene ID" value="TanjilG_11814"/>
</dbReference>
<dbReference type="GeneID" id="109358814"/>
<dbReference type="Gramene" id="OIW03177">
    <property type="protein sequence ID" value="OIW03177"/>
    <property type="gene ID" value="TanjilG_11814"/>
</dbReference>
<dbReference type="KEGG" id="lang:109358814"/>
<dbReference type="OrthoDB" id="45365at2759"/>
<dbReference type="UniPathway" id="UPA00143"/>
<dbReference type="Proteomes" id="UP000188354">
    <property type="component" value="Chromosome LG10"/>
</dbReference>
<dbReference type="GO" id="GO:0005737">
    <property type="term" value="C:cytoplasm"/>
    <property type="evidence" value="ECO:0007669"/>
    <property type="project" value="UniProtKB-SubCell"/>
</dbReference>
<dbReference type="GO" id="GO:0005634">
    <property type="term" value="C:nucleus"/>
    <property type="evidence" value="ECO:0007669"/>
    <property type="project" value="UniProtKB-SubCell"/>
</dbReference>
<dbReference type="GO" id="GO:0005886">
    <property type="term" value="C:plasma membrane"/>
    <property type="evidence" value="ECO:0007669"/>
    <property type="project" value="UniProtKB-SubCell"/>
</dbReference>
<dbReference type="GO" id="GO:0000976">
    <property type="term" value="F:transcription cis-regulatory region binding"/>
    <property type="evidence" value="ECO:0007669"/>
    <property type="project" value="TreeGrafter"/>
</dbReference>
<dbReference type="GO" id="GO:0008270">
    <property type="term" value="F:zinc ion binding"/>
    <property type="evidence" value="ECO:0007669"/>
    <property type="project" value="UniProtKB-KW"/>
</dbReference>
<dbReference type="GO" id="GO:0009864">
    <property type="term" value="P:induced systemic resistance, jasmonic acid mediated signaling pathway"/>
    <property type="evidence" value="ECO:0007669"/>
    <property type="project" value="TreeGrafter"/>
</dbReference>
<dbReference type="GO" id="GO:0009877">
    <property type="term" value="P:nodulation"/>
    <property type="evidence" value="ECO:0007669"/>
    <property type="project" value="UniProtKB-KW"/>
</dbReference>
<dbReference type="GO" id="GO:0099402">
    <property type="term" value="P:plant organ development"/>
    <property type="evidence" value="ECO:0007669"/>
    <property type="project" value="InterPro"/>
</dbReference>
<dbReference type="GO" id="GO:0006355">
    <property type="term" value="P:regulation of DNA-templated transcription"/>
    <property type="evidence" value="ECO:0007669"/>
    <property type="project" value="TreeGrafter"/>
</dbReference>
<dbReference type="CDD" id="cd18310">
    <property type="entry name" value="BTB_POZ_NPR_plant"/>
    <property type="match status" value="1"/>
</dbReference>
<dbReference type="FunFam" id="3.30.710.10:FF:000084">
    <property type="entry name" value="regulatory protein NPR5 isoform X1"/>
    <property type="match status" value="1"/>
</dbReference>
<dbReference type="FunFam" id="1.25.40.20:FF:000058">
    <property type="entry name" value="regulatory protein NPR5 isoform X2"/>
    <property type="match status" value="1"/>
</dbReference>
<dbReference type="Gene3D" id="1.25.40.20">
    <property type="entry name" value="Ankyrin repeat-containing domain"/>
    <property type="match status" value="1"/>
</dbReference>
<dbReference type="Gene3D" id="3.30.710.10">
    <property type="entry name" value="Potassium Channel Kv1.1, Chain A"/>
    <property type="match status" value="1"/>
</dbReference>
<dbReference type="InterPro" id="IPR002110">
    <property type="entry name" value="Ankyrin_rpt"/>
</dbReference>
<dbReference type="InterPro" id="IPR036770">
    <property type="entry name" value="Ankyrin_rpt-contain_sf"/>
</dbReference>
<dbReference type="InterPro" id="IPR000210">
    <property type="entry name" value="BTB/POZ_dom"/>
</dbReference>
<dbReference type="InterPro" id="IPR044284">
    <property type="entry name" value="NPR5/6"/>
</dbReference>
<dbReference type="InterPro" id="IPR024228">
    <property type="entry name" value="NPR_central_dom"/>
</dbReference>
<dbReference type="InterPro" id="IPR011333">
    <property type="entry name" value="SKP1/BTB/POZ_sf"/>
</dbReference>
<dbReference type="PANTHER" id="PTHR46668">
    <property type="entry name" value="BTB/POZ DOMAIN AND ANKYRIN REPEAT-CONTAINING PROTEIN NH5.2"/>
    <property type="match status" value="1"/>
</dbReference>
<dbReference type="PANTHER" id="PTHR46668:SF1">
    <property type="entry name" value="REGULATORY PROTEIN NPR5"/>
    <property type="match status" value="1"/>
</dbReference>
<dbReference type="Pfam" id="PF12796">
    <property type="entry name" value="Ank_2"/>
    <property type="match status" value="1"/>
</dbReference>
<dbReference type="Pfam" id="PF00651">
    <property type="entry name" value="BTB"/>
    <property type="match status" value="1"/>
</dbReference>
<dbReference type="Pfam" id="PF11900">
    <property type="entry name" value="DUF3420"/>
    <property type="match status" value="1"/>
</dbReference>
<dbReference type="SMART" id="SM00248">
    <property type="entry name" value="ANK"/>
    <property type="match status" value="2"/>
</dbReference>
<dbReference type="SMART" id="SM00225">
    <property type="entry name" value="BTB"/>
    <property type="match status" value="1"/>
</dbReference>
<dbReference type="SUPFAM" id="SSF48403">
    <property type="entry name" value="Ankyrin repeat"/>
    <property type="match status" value="1"/>
</dbReference>
<dbReference type="SUPFAM" id="SSF54695">
    <property type="entry name" value="POZ domain"/>
    <property type="match status" value="1"/>
</dbReference>
<dbReference type="PROSITE" id="PS50297">
    <property type="entry name" value="ANK_REP_REGION"/>
    <property type="match status" value="1"/>
</dbReference>
<dbReference type="PROSITE" id="PS50088">
    <property type="entry name" value="ANK_REPEAT"/>
    <property type="match status" value="1"/>
</dbReference>
<dbReference type="PROSITE" id="PS50097">
    <property type="entry name" value="BTB"/>
    <property type="match status" value="1"/>
</dbReference>
<dbReference type="PROSITE" id="PS52046">
    <property type="entry name" value="ZF_C2HC_NPR"/>
    <property type="match status" value="1"/>
</dbReference>
<name>NBCL_LUPAN</name>
<evidence type="ECO:0000250" key="1">
    <source>
        <dbReference type="UniProtKB" id="G3LSH3"/>
    </source>
</evidence>
<evidence type="ECO:0000250" key="2">
    <source>
        <dbReference type="UniProtKB" id="O22286"/>
    </source>
</evidence>
<evidence type="ECO:0000250" key="3">
    <source>
        <dbReference type="UniProtKB" id="Q2HW56"/>
    </source>
</evidence>
<evidence type="ECO:0000250" key="4">
    <source>
        <dbReference type="UniProtKB" id="Q9ZVC2"/>
    </source>
</evidence>
<evidence type="ECO:0000255" key="5"/>
<evidence type="ECO:0000255" key="6">
    <source>
        <dbReference type="PROSITE-ProRule" id="PRU00037"/>
    </source>
</evidence>
<evidence type="ECO:0000255" key="7">
    <source>
        <dbReference type="PROSITE-ProRule" id="PRU01391"/>
    </source>
</evidence>
<evidence type="ECO:0000256" key="8">
    <source>
        <dbReference type="SAM" id="MobiDB-lite"/>
    </source>
</evidence>
<evidence type="ECO:0000269" key="9">
    <source>
    </source>
</evidence>
<evidence type="ECO:0000269" key="10">
    <source>
    </source>
</evidence>
<evidence type="ECO:0000303" key="11">
    <source>
    </source>
</evidence>
<evidence type="ECO:0000303" key="12">
    <source>
    </source>
</evidence>
<evidence type="ECO:0000305" key="13"/>
<evidence type="ECO:0000312" key="14">
    <source>
        <dbReference type="EMBL" id="AKQ62940.1"/>
    </source>
</evidence>
<evidence type="ECO:0000312" key="15">
    <source>
        <dbReference type="EMBL" id="AKQ62941.1"/>
    </source>
</evidence>
<evidence type="ECO:0000312" key="16">
    <source>
        <dbReference type="EMBL" id="OIW03177.1"/>
    </source>
</evidence>
<feature type="chain" id="PRO_0000460427" description="BTB/POZ domain and ankyrin repeat-containing protein NBCL">
    <location>
        <begin position="1"/>
        <end position="486"/>
    </location>
</feature>
<feature type="domain" description="BTB" evidence="6">
    <location>
        <begin position="25"/>
        <end position="115"/>
    </location>
</feature>
<feature type="repeat" description="ANK 1" evidence="5">
    <location>
        <begin position="257"/>
        <end position="286"/>
    </location>
</feature>
<feature type="repeat" description="ANK 2" evidence="5">
    <location>
        <begin position="287"/>
        <end position="316"/>
    </location>
</feature>
<feature type="repeat" description="ANK 3" evidence="5">
    <location>
        <begin position="321"/>
        <end position="350"/>
    </location>
</feature>
<feature type="repeat" description="ANK 4" evidence="13">
    <location>
        <begin position="354"/>
        <end position="388"/>
    </location>
</feature>
<feature type="zinc finger region" description="C2HC NPR-type" evidence="7">
    <location>
        <begin position="121"/>
        <end position="135"/>
    </location>
</feature>
<feature type="region of interest" description="Disordered" evidence="8">
    <location>
        <begin position="403"/>
        <end position="441"/>
    </location>
</feature>
<feature type="region of interest" description="Disordered" evidence="8">
    <location>
        <begin position="464"/>
        <end position="486"/>
    </location>
</feature>
<feature type="compositionally biased region" description="Low complexity" evidence="8">
    <location>
        <begin position="406"/>
        <end position="418"/>
    </location>
</feature>
<feature type="compositionally biased region" description="Low complexity" evidence="8">
    <location>
        <begin position="432"/>
        <end position="441"/>
    </location>
</feature>
<feature type="compositionally biased region" description="Basic and acidic residues" evidence="8">
    <location>
        <begin position="466"/>
        <end position="475"/>
    </location>
</feature>
<feature type="binding site" evidence="7">
    <location>
        <position position="124"/>
    </location>
    <ligand>
        <name>Zn(2+)</name>
        <dbReference type="ChEBI" id="CHEBI:29105"/>
    </ligand>
</feature>
<feature type="binding site" evidence="7">
    <location>
        <position position="129"/>
    </location>
    <ligand>
        <name>Zn(2+)</name>
        <dbReference type="ChEBI" id="CHEBI:29105"/>
    </ligand>
</feature>
<feature type="binding site" evidence="7">
    <location>
        <position position="131"/>
    </location>
    <ligand>
        <name>Zn(2+)</name>
        <dbReference type="ChEBI" id="CHEBI:29105"/>
    </ligand>
</feature>
<feature type="binding site" evidence="7">
    <location>
        <position position="134"/>
    </location>
    <ligand>
        <name>Zn(2+)</name>
        <dbReference type="ChEBI" id="CHEBI:29105"/>
    </ligand>
</feature>
<feature type="mutagenesis site" description="In Mstip; defective in stipule formation and leaf abscission." evidence="9 10">
    <original>S</original>
    <variation>F</variation>
    <location>
        <position position="395"/>
    </location>
</feature>
<keyword id="KW-0040">ANK repeat</keyword>
<keyword id="KW-1003">Cell membrane</keyword>
<keyword id="KW-0963">Cytoplasm</keyword>
<keyword id="KW-0472">Membrane</keyword>
<keyword id="KW-0479">Metal-binding</keyword>
<keyword id="KW-0536">Nodulation</keyword>
<keyword id="KW-0539">Nucleus</keyword>
<keyword id="KW-1185">Reference proteome</keyword>
<keyword id="KW-0677">Repeat</keyword>
<keyword id="KW-0833">Ubl conjugation pathway</keyword>
<keyword id="KW-0862">Zinc</keyword>
<keyword id="KW-0863">Zinc-finger</keyword>
<organism>
    <name type="scientific">Lupinus angustifolius</name>
    <name type="common">Narrow-leaved blue lupine</name>
    <dbReference type="NCBI Taxonomy" id="3871"/>
    <lineage>
        <taxon>Eukaryota</taxon>
        <taxon>Viridiplantae</taxon>
        <taxon>Streptophyta</taxon>
        <taxon>Embryophyta</taxon>
        <taxon>Tracheophyta</taxon>
        <taxon>Spermatophyta</taxon>
        <taxon>Magnoliopsida</taxon>
        <taxon>eudicotyledons</taxon>
        <taxon>Gunneridae</taxon>
        <taxon>Pentapetalae</taxon>
        <taxon>rosids</taxon>
        <taxon>fabids</taxon>
        <taxon>Fabales</taxon>
        <taxon>Fabaceae</taxon>
        <taxon>Papilionoideae</taxon>
        <taxon>50 kb inversion clade</taxon>
        <taxon>genistoids sensu lato</taxon>
        <taxon>core genistoids</taxon>
        <taxon>Genisteae</taxon>
        <taxon>Lupinus</taxon>
    </lineage>
</organism>
<accession>A0A0K0PU92</accession>
<accession>A0A0K0PUA0</accession>
<proteinExistence type="evidence at protein level"/>